<organism>
    <name type="scientific">Arabidopsis thaliana</name>
    <name type="common">Mouse-ear cress</name>
    <dbReference type="NCBI Taxonomy" id="3702"/>
    <lineage>
        <taxon>Eukaryota</taxon>
        <taxon>Viridiplantae</taxon>
        <taxon>Streptophyta</taxon>
        <taxon>Embryophyta</taxon>
        <taxon>Tracheophyta</taxon>
        <taxon>Spermatophyta</taxon>
        <taxon>Magnoliopsida</taxon>
        <taxon>eudicotyledons</taxon>
        <taxon>Gunneridae</taxon>
        <taxon>Pentapetalae</taxon>
        <taxon>rosids</taxon>
        <taxon>malvids</taxon>
        <taxon>Brassicales</taxon>
        <taxon>Brassicaceae</taxon>
        <taxon>Camelineae</taxon>
        <taxon>Arabidopsis</taxon>
    </lineage>
</organism>
<sequence>MQEEKSKEDHSRLINVTAKDLTVRNRRLVEVPYTATLSHAMNTLVANSISALPVAAPPGHWIGAGGSMIMESDKQTGVVRKHYIGILTMLDILAHIAGEDSNLSDLDRKMSSQVSSIIGHCLEGLSLWTLNPNTSVLECMEVFSKGIHRALVPVESSIESNNTIAGVELIESASAYKMLTQMDLLRFLKDHHFDDLKTVLSRSISDLGAVNDSVYAITERTTVSNAINVMKGALLNAVPIVHAPDIAQEDHLQLVNGRHRKVIGTFSATDLKGCRLPELQTWLPLTALEFTEKTSGKEREVVSCGVESTMEEAIEKVVTRGVHRVWVMDQQGLLQGVVSLTDIIRSLRSTLS</sequence>
<name>PV42A_ARATH</name>
<gene>
    <name type="primary">PV42A</name>
    <name type="synonym">CBSCBS4</name>
    <name type="ordered locus">At1g15330</name>
    <name type="ORF">F9L1.27</name>
</gene>
<reference key="1">
    <citation type="journal article" date="2000" name="Nature">
        <title>Sequence and analysis of chromosome 1 of the plant Arabidopsis thaliana.</title>
        <authorList>
            <person name="Theologis A."/>
            <person name="Ecker J.R."/>
            <person name="Palm C.J."/>
            <person name="Federspiel N.A."/>
            <person name="Kaul S."/>
            <person name="White O."/>
            <person name="Alonso J."/>
            <person name="Altafi H."/>
            <person name="Araujo R."/>
            <person name="Bowman C.L."/>
            <person name="Brooks S.Y."/>
            <person name="Buehler E."/>
            <person name="Chan A."/>
            <person name="Chao Q."/>
            <person name="Chen H."/>
            <person name="Cheuk R.F."/>
            <person name="Chin C.W."/>
            <person name="Chung M.K."/>
            <person name="Conn L."/>
            <person name="Conway A.B."/>
            <person name="Conway A.R."/>
            <person name="Creasy T.H."/>
            <person name="Dewar K."/>
            <person name="Dunn P."/>
            <person name="Etgu P."/>
            <person name="Feldblyum T.V."/>
            <person name="Feng J.-D."/>
            <person name="Fong B."/>
            <person name="Fujii C.Y."/>
            <person name="Gill J.E."/>
            <person name="Goldsmith A.D."/>
            <person name="Haas B."/>
            <person name="Hansen N.F."/>
            <person name="Hughes B."/>
            <person name="Huizar L."/>
            <person name="Hunter J.L."/>
            <person name="Jenkins J."/>
            <person name="Johnson-Hopson C."/>
            <person name="Khan S."/>
            <person name="Khaykin E."/>
            <person name="Kim C.J."/>
            <person name="Koo H.L."/>
            <person name="Kremenetskaia I."/>
            <person name="Kurtz D.B."/>
            <person name="Kwan A."/>
            <person name="Lam B."/>
            <person name="Langin-Hooper S."/>
            <person name="Lee A."/>
            <person name="Lee J.M."/>
            <person name="Lenz C.A."/>
            <person name="Li J.H."/>
            <person name="Li Y.-P."/>
            <person name="Lin X."/>
            <person name="Liu S.X."/>
            <person name="Liu Z.A."/>
            <person name="Luros J.S."/>
            <person name="Maiti R."/>
            <person name="Marziali A."/>
            <person name="Militscher J."/>
            <person name="Miranda M."/>
            <person name="Nguyen M."/>
            <person name="Nierman W.C."/>
            <person name="Osborne B.I."/>
            <person name="Pai G."/>
            <person name="Peterson J."/>
            <person name="Pham P.K."/>
            <person name="Rizzo M."/>
            <person name="Rooney T."/>
            <person name="Rowley D."/>
            <person name="Sakano H."/>
            <person name="Salzberg S.L."/>
            <person name="Schwartz J.R."/>
            <person name="Shinn P."/>
            <person name="Southwick A.M."/>
            <person name="Sun H."/>
            <person name="Tallon L.J."/>
            <person name="Tambunga G."/>
            <person name="Toriumi M.J."/>
            <person name="Town C.D."/>
            <person name="Utterback T."/>
            <person name="Van Aken S."/>
            <person name="Vaysberg M."/>
            <person name="Vysotskaia V.S."/>
            <person name="Walker M."/>
            <person name="Wu D."/>
            <person name="Yu G."/>
            <person name="Fraser C.M."/>
            <person name="Venter J.C."/>
            <person name="Davis R.W."/>
        </authorList>
    </citation>
    <scope>NUCLEOTIDE SEQUENCE [LARGE SCALE GENOMIC DNA]</scope>
    <source>
        <strain>cv. Columbia</strain>
    </source>
</reference>
<reference key="2">
    <citation type="journal article" date="2017" name="Plant J.">
        <title>Araport11: a complete reannotation of the Arabidopsis thaliana reference genome.</title>
        <authorList>
            <person name="Cheng C.Y."/>
            <person name="Krishnakumar V."/>
            <person name="Chan A.P."/>
            <person name="Thibaud-Nissen F."/>
            <person name="Schobel S."/>
            <person name="Town C.D."/>
        </authorList>
    </citation>
    <scope>GENOME REANNOTATION</scope>
    <source>
        <strain>cv. Columbia</strain>
    </source>
</reference>
<reference key="3">
    <citation type="submission" date="2005-05" db="EMBL/GenBank/DDBJ databases">
        <title>Arabidopsis ORF clones.</title>
        <authorList>
            <person name="Kim C.J."/>
            <person name="Chen H."/>
            <person name="Cheuk R."/>
            <person name="Shinn P."/>
            <person name="Ecker J.R."/>
        </authorList>
    </citation>
    <scope>NUCLEOTIDE SEQUENCE [LARGE SCALE MRNA]</scope>
    <source>
        <strain>cv. Columbia</strain>
    </source>
</reference>
<reference key="4">
    <citation type="submission" date="2006-07" db="EMBL/GenBank/DDBJ databases">
        <title>Large-scale analysis of RIKEN Arabidopsis full-length (RAFL) cDNAs.</title>
        <authorList>
            <person name="Totoki Y."/>
            <person name="Seki M."/>
            <person name="Ishida J."/>
            <person name="Nakajima M."/>
            <person name="Enju A."/>
            <person name="Kamiya A."/>
            <person name="Narusaka M."/>
            <person name="Shin-i T."/>
            <person name="Nakagawa M."/>
            <person name="Sakamoto N."/>
            <person name="Oishi K."/>
            <person name="Kohara Y."/>
            <person name="Kobayashi M."/>
            <person name="Toyoda A."/>
            <person name="Sakaki Y."/>
            <person name="Sakurai T."/>
            <person name="Iida K."/>
            <person name="Akiyama K."/>
            <person name="Satou M."/>
            <person name="Toyoda T."/>
            <person name="Konagaya A."/>
            <person name="Carninci P."/>
            <person name="Kawai J."/>
            <person name="Hayashizaki Y."/>
            <person name="Shinozaki K."/>
        </authorList>
    </citation>
    <scope>NUCLEOTIDE SEQUENCE [LARGE SCALE MRNA]</scope>
    <source>
        <strain>cv. Columbia</strain>
    </source>
</reference>
<reference key="5">
    <citation type="submission" date="2006-08" db="EMBL/GenBank/DDBJ databases">
        <title>Arabidopsis ORF Clones.</title>
        <authorList>
            <person name="Quinitio C."/>
            <person name="Chen H."/>
            <person name="Kim C.J."/>
            <person name="Shinn P."/>
            <person name="Ecker J.R."/>
        </authorList>
    </citation>
    <scope>NUCLEOTIDE SEQUENCE [LARGE SCALE MRNA]</scope>
    <source>
        <strain>cv. Columbia</strain>
    </source>
</reference>
<reference key="6">
    <citation type="journal article" date="2009" name="BMC Genomics">
        <title>Genome wide expression analysis of CBS domain containing proteins in Arabidopsis thaliana (L.) Heynh and Oryza sativa L. reveals their developmental and stress regulation.</title>
        <authorList>
            <person name="Kushwaha H.R."/>
            <person name="Singh A.K."/>
            <person name="Sopory S.K."/>
            <person name="Singla-Pareek S.L."/>
            <person name="Pareek A."/>
        </authorList>
    </citation>
    <scope>GENE FAMILY</scope>
    <scope>NOMENCLATURE</scope>
</reference>
<reference key="7">
    <citation type="journal article" date="2011" name="PLoS ONE">
        <title>AtPV42a and AtPV42b redundantly regulate reproductive development in Arabidopsis thaliana.</title>
        <authorList>
            <person name="Fang L."/>
            <person name="Hou X."/>
            <person name="Lee L.Y."/>
            <person name="Liu L."/>
            <person name="Yan X."/>
            <person name="Yu H."/>
        </authorList>
    </citation>
    <scope>FUNCTION</scope>
    <scope>DISRUPTION PHENOTYPE</scope>
    <scope>TISSUE SPECIFICITY</scope>
</reference>
<keyword id="KW-0129">CBS domain</keyword>
<keyword id="KW-1185">Reference proteome</keyword>
<keyword id="KW-0677">Repeat</keyword>
<comment type="function">
    <text evidence="2">Plays redundant role with PV42b in regulating male gametogenesis and pollen tube guidance.</text>
</comment>
<comment type="tissue specificity">
    <text evidence="2">Expressed highly in rosette leaves, cauline leaves, open flowers, developing siliques and dry seeds, but at a low level in stems and floral buds.</text>
</comment>
<comment type="disruption phenotype">
    <text evidence="2">Shorter siliques and reduced seed sets in pv42a and pv42b RNAi double mutant.</text>
</comment>
<comment type="similarity">
    <text evidence="3">Belongs to the 5'-AMP-activated protein kinase gamma subunit family.</text>
</comment>
<proteinExistence type="evidence at transcript level"/>
<dbReference type="EMBL" id="AC007591">
    <property type="protein sequence ID" value="AAD39660.1"/>
    <property type="molecule type" value="Genomic_DNA"/>
</dbReference>
<dbReference type="EMBL" id="CP002684">
    <property type="protein sequence ID" value="AEE29304.1"/>
    <property type="molecule type" value="Genomic_DNA"/>
</dbReference>
<dbReference type="EMBL" id="BT023415">
    <property type="protein sequence ID" value="AAY56406.1"/>
    <property type="molecule type" value="mRNA"/>
</dbReference>
<dbReference type="EMBL" id="AK229160">
    <property type="protein sequence ID" value="BAF01033.1"/>
    <property type="molecule type" value="mRNA"/>
</dbReference>
<dbReference type="EMBL" id="BT026513">
    <property type="protein sequence ID" value="ABH04620.1"/>
    <property type="molecule type" value="mRNA"/>
</dbReference>
<dbReference type="PIR" id="F86287">
    <property type="entry name" value="F86287"/>
</dbReference>
<dbReference type="RefSeq" id="NP_172985.1">
    <property type="nucleotide sequence ID" value="NM_101402.3"/>
</dbReference>
<dbReference type="SMR" id="Q9XI37"/>
<dbReference type="FunCoup" id="Q9XI37">
    <property type="interactions" value="265"/>
</dbReference>
<dbReference type="STRING" id="3702.Q9XI37"/>
<dbReference type="PaxDb" id="3702-AT1G15330.1"/>
<dbReference type="ProteomicsDB" id="224802"/>
<dbReference type="EnsemblPlants" id="AT1G15330.1">
    <property type="protein sequence ID" value="AT1G15330.1"/>
    <property type="gene ID" value="AT1G15330"/>
</dbReference>
<dbReference type="GeneID" id="838102"/>
<dbReference type="Gramene" id="AT1G15330.1">
    <property type="protein sequence ID" value="AT1G15330.1"/>
    <property type="gene ID" value="AT1G15330"/>
</dbReference>
<dbReference type="KEGG" id="ath:AT1G15330"/>
<dbReference type="Araport" id="AT1G15330"/>
<dbReference type="TAIR" id="AT1G15330"/>
<dbReference type="eggNOG" id="KOG1764">
    <property type="taxonomic scope" value="Eukaryota"/>
</dbReference>
<dbReference type="HOGENOM" id="CLU_062724_0_0_1"/>
<dbReference type="InParanoid" id="Q9XI37"/>
<dbReference type="OMA" id="ECMEVFS"/>
<dbReference type="OrthoDB" id="449052at2759"/>
<dbReference type="PhylomeDB" id="Q9XI37"/>
<dbReference type="PRO" id="PR:Q9XI37"/>
<dbReference type="Proteomes" id="UP000006548">
    <property type="component" value="Chromosome 1"/>
</dbReference>
<dbReference type="ExpressionAtlas" id="Q9XI37">
    <property type="expression patterns" value="baseline and differential"/>
</dbReference>
<dbReference type="GO" id="GO:0003006">
    <property type="term" value="P:developmental process involved in reproduction"/>
    <property type="evidence" value="ECO:0000315"/>
    <property type="project" value="TAIR"/>
</dbReference>
<dbReference type="GO" id="GO:0009553">
    <property type="term" value="P:embryo sac development"/>
    <property type="evidence" value="ECO:0000315"/>
    <property type="project" value="UniProtKB"/>
</dbReference>
<dbReference type="GO" id="GO:0009555">
    <property type="term" value="P:pollen development"/>
    <property type="evidence" value="ECO:0000315"/>
    <property type="project" value="TAIR"/>
</dbReference>
<dbReference type="GO" id="GO:0010183">
    <property type="term" value="P:pollen tube guidance"/>
    <property type="evidence" value="ECO:0000315"/>
    <property type="project" value="TAIR"/>
</dbReference>
<dbReference type="GO" id="GO:0048443">
    <property type="term" value="P:stamen development"/>
    <property type="evidence" value="ECO:0000315"/>
    <property type="project" value="UniProtKB"/>
</dbReference>
<dbReference type="FunFam" id="3.10.580.10:FF:000097">
    <property type="entry name" value="SNF1-related protein kinase regulatory subunit gamma-like PV42a"/>
    <property type="match status" value="1"/>
</dbReference>
<dbReference type="FunFam" id="3.10.580.10:FF:000109">
    <property type="entry name" value="SNF1-related protein kinase regulatory subunit gamma-like PV42b"/>
    <property type="match status" value="1"/>
</dbReference>
<dbReference type="Gene3D" id="3.10.580.10">
    <property type="entry name" value="CBS-domain"/>
    <property type="match status" value="2"/>
</dbReference>
<dbReference type="InterPro" id="IPR050511">
    <property type="entry name" value="AMPK_gamma/SDS23_families"/>
</dbReference>
<dbReference type="InterPro" id="IPR000644">
    <property type="entry name" value="CBS_dom"/>
</dbReference>
<dbReference type="InterPro" id="IPR046342">
    <property type="entry name" value="CBS_dom_sf"/>
</dbReference>
<dbReference type="PANTHER" id="PTHR13780">
    <property type="entry name" value="AMP-ACTIVATED PROTEIN KINASE, GAMMA REGULATORY SUBUNIT"/>
    <property type="match status" value="1"/>
</dbReference>
<dbReference type="PANTHER" id="PTHR13780:SF101">
    <property type="entry name" value="SNF1-RELATED PROTEIN KINASE REGULATORY SUBUNIT GAMMA-LIKE PV42A"/>
    <property type="match status" value="1"/>
</dbReference>
<dbReference type="Pfam" id="PF00571">
    <property type="entry name" value="CBS"/>
    <property type="match status" value="1"/>
</dbReference>
<dbReference type="SMART" id="SM00116">
    <property type="entry name" value="CBS"/>
    <property type="match status" value="3"/>
</dbReference>
<dbReference type="SUPFAM" id="SSF54631">
    <property type="entry name" value="CBS-domain pair"/>
    <property type="match status" value="2"/>
</dbReference>
<dbReference type="PROSITE" id="PS51371">
    <property type="entry name" value="CBS"/>
    <property type="match status" value="4"/>
</dbReference>
<protein>
    <recommendedName>
        <fullName>SNF1-related protein kinase regulatory subunit gamma-like PV42a</fullName>
        <shortName>AtPV42a</shortName>
    </recommendedName>
    <alternativeName>
        <fullName>AKIN subunit gamma-like PV42a</fullName>
    </alternativeName>
    <alternativeName>
        <fullName>CBS domain-containing protein CBSCBS4</fullName>
    </alternativeName>
</protein>
<feature type="chain" id="PRO_0000412193" description="SNF1-related protein kinase regulatory subunit gamma-like PV42a">
    <location>
        <begin position="1"/>
        <end position="352"/>
    </location>
</feature>
<feature type="domain" description="CBS 1" evidence="1">
    <location>
        <begin position="24"/>
        <end position="106"/>
    </location>
</feature>
<feature type="domain" description="CBS 2" evidence="1">
    <location>
        <begin position="122"/>
        <end position="196"/>
    </location>
</feature>
<feature type="domain" description="CBS 3" evidence="1">
    <location>
        <begin position="210"/>
        <end position="281"/>
    </location>
</feature>
<feature type="domain" description="CBS 4" evidence="1">
    <location>
        <begin position="297"/>
        <end position="352"/>
    </location>
</feature>
<accession>Q9XI37</accession>
<evidence type="ECO:0000255" key="1">
    <source>
        <dbReference type="PROSITE-ProRule" id="PRU00703"/>
    </source>
</evidence>
<evidence type="ECO:0000269" key="2">
    <source>
    </source>
</evidence>
<evidence type="ECO:0000305" key="3"/>